<gene>
    <name type="primary">GLG2</name>
    <name type="synonym">LIP2</name>
</gene>
<organism>
    <name type="scientific">Phanerodontia chrysosporium</name>
    <name type="common">White-rot fungus</name>
    <name type="synonym">Sporotrichum pruinosum</name>
    <dbReference type="NCBI Taxonomy" id="2822231"/>
    <lineage>
        <taxon>Eukaryota</taxon>
        <taxon>Fungi</taxon>
        <taxon>Dikarya</taxon>
        <taxon>Basidiomycota</taxon>
        <taxon>Agaricomycotina</taxon>
        <taxon>Agaricomycetes</taxon>
        <taxon>Polyporales</taxon>
        <taxon>Phanerochaetaceae</taxon>
        <taxon>Phanerodontia</taxon>
    </lineage>
</organism>
<proteinExistence type="evidence at protein level"/>
<keyword id="KW-0002">3D-structure</keyword>
<keyword id="KW-0106">Calcium</keyword>
<keyword id="KW-0165">Cleavage on pair of basic residues</keyword>
<keyword id="KW-0903">Direct protein sequencing</keyword>
<keyword id="KW-1015">Disulfide bond</keyword>
<keyword id="KW-0325">Glycoprotein</keyword>
<keyword id="KW-0349">Heme</keyword>
<keyword id="KW-0379">Hydroxylation</keyword>
<keyword id="KW-0408">Iron</keyword>
<keyword id="KW-0439">Lignin degradation</keyword>
<keyword id="KW-0479">Metal-binding</keyword>
<keyword id="KW-0560">Oxidoreductase</keyword>
<keyword id="KW-0575">Peroxidase</keyword>
<keyword id="KW-0732">Signal</keyword>
<keyword id="KW-0865">Zymogen</keyword>
<evidence type="ECO:0000250" key="1">
    <source>
        <dbReference type="UniProtKB" id="P06181"/>
    </source>
</evidence>
<evidence type="ECO:0000255" key="2"/>
<evidence type="ECO:0000269" key="3">
    <source>
    </source>
</evidence>
<evidence type="ECO:0000269" key="4">
    <source>
    </source>
</evidence>
<evidence type="ECO:0000305" key="5"/>
<evidence type="ECO:0007829" key="6">
    <source>
        <dbReference type="PDB" id="1LGA"/>
    </source>
</evidence>
<evidence type="ECO:0007829" key="7">
    <source>
        <dbReference type="PDB" id="1LLP"/>
    </source>
</evidence>
<dbReference type="EC" id="1.11.1.14" evidence="1"/>
<dbReference type="EMBL" id="M74229">
    <property type="protein sequence ID" value="AAA33735.1"/>
    <property type="molecule type" value="mRNA"/>
</dbReference>
<dbReference type="EMBL" id="M92644">
    <property type="protein sequence ID" value="AAA33738.1"/>
    <property type="molecule type" value="Genomic_DNA"/>
</dbReference>
<dbReference type="PIR" id="JC1268">
    <property type="entry name" value="JC1268"/>
</dbReference>
<dbReference type="PDB" id="1LGA">
    <property type="method" value="X-ray"/>
    <property type="resolution" value="2.03 A"/>
    <property type="chains" value="A/B=29-371"/>
</dbReference>
<dbReference type="PDB" id="1LLP">
    <property type="method" value="X-ray"/>
    <property type="resolution" value="1.70 A"/>
    <property type="chains" value="A=29-371"/>
</dbReference>
<dbReference type="PDBsum" id="1LGA"/>
<dbReference type="PDBsum" id="1LLP"/>
<dbReference type="SMR" id="P49012"/>
<dbReference type="CAZy" id="AA2">
    <property type="family name" value="Auxiliary Activities 2"/>
</dbReference>
<dbReference type="PeroxiBase" id="2409">
    <property type="entry name" value="PcLiP05_RP78"/>
</dbReference>
<dbReference type="GlyCosmos" id="P49012">
    <property type="glycosylation" value="1 site, No reported glycans"/>
</dbReference>
<dbReference type="EnsemblFungi" id="AGR57_14158T0">
    <property type="protein sequence ID" value="AGR57_14158T0-p1"/>
    <property type="gene ID" value="AGR57_14158"/>
</dbReference>
<dbReference type="VEuPathDB" id="FungiDB:AGR57_14158"/>
<dbReference type="OMA" id="ADKCCVW"/>
<dbReference type="BRENDA" id="1.11.1.14">
    <property type="organism ID" value="1380"/>
</dbReference>
<dbReference type="UniPathway" id="UPA00892"/>
<dbReference type="EvolutionaryTrace" id="P49012"/>
<dbReference type="GO" id="GO:0016690">
    <property type="term" value="F:diarylpropane peroxidase activity"/>
    <property type="evidence" value="ECO:0007669"/>
    <property type="project" value="UniProtKB-EC"/>
</dbReference>
<dbReference type="GO" id="GO:0020037">
    <property type="term" value="F:heme binding"/>
    <property type="evidence" value="ECO:0007669"/>
    <property type="project" value="InterPro"/>
</dbReference>
<dbReference type="GO" id="GO:0046872">
    <property type="term" value="F:metal ion binding"/>
    <property type="evidence" value="ECO:0007669"/>
    <property type="project" value="UniProtKB-KW"/>
</dbReference>
<dbReference type="GO" id="GO:0034599">
    <property type="term" value="P:cellular response to oxidative stress"/>
    <property type="evidence" value="ECO:0007669"/>
    <property type="project" value="InterPro"/>
</dbReference>
<dbReference type="GO" id="GO:0042744">
    <property type="term" value="P:hydrogen peroxide catabolic process"/>
    <property type="evidence" value="ECO:0007669"/>
    <property type="project" value="TreeGrafter"/>
</dbReference>
<dbReference type="GO" id="GO:0046274">
    <property type="term" value="P:lignin catabolic process"/>
    <property type="evidence" value="ECO:0007669"/>
    <property type="project" value="UniProtKB-UniPathway"/>
</dbReference>
<dbReference type="GO" id="GO:0000302">
    <property type="term" value="P:response to reactive oxygen species"/>
    <property type="evidence" value="ECO:0007669"/>
    <property type="project" value="TreeGrafter"/>
</dbReference>
<dbReference type="CDD" id="cd00692">
    <property type="entry name" value="ligninase"/>
    <property type="match status" value="1"/>
</dbReference>
<dbReference type="Gene3D" id="1.10.520.10">
    <property type="match status" value="1"/>
</dbReference>
<dbReference type="Gene3D" id="1.10.420.10">
    <property type="entry name" value="Peroxidase, domain 2"/>
    <property type="match status" value="1"/>
</dbReference>
<dbReference type="InterPro" id="IPR044831">
    <property type="entry name" value="Ccp1-like"/>
</dbReference>
<dbReference type="InterPro" id="IPR002016">
    <property type="entry name" value="Haem_peroxidase"/>
</dbReference>
<dbReference type="InterPro" id="IPR010255">
    <property type="entry name" value="Haem_peroxidase_sf"/>
</dbReference>
<dbReference type="InterPro" id="IPR001621">
    <property type="entry name" value="Ligninase"/>
</dbReference>
<dbReference type="InterPro" id="IPR024589">
    <property type="entry name" value="Ligninase_C"/>
</dbReference>
<dbReference type="InterPro" id="IPR019794">
    <property type="entry name" value="Peroxidases_AS"/>
</dbReference>
<dbReference type="InterPro" id="IPR019793">
    <property type="entry name" value="Peroxidases_heam-ligand_BS"/>
</dbReference>
<dbReference type="PANTHER" id="PTHR31356:SF66">
    <property type="entry name" value="CATALASE-PEROXIDASE"/>
    <property type="match status" value="1"/>
</dbReference>
<dbReference type="PANTHER" id="PTHR31356">
    <property type="entry name" value="THYLAKOID LUMENAL 29 KDA PROTEIN, CHLOROPLASTIC-RELATED"/>
    <property type="match status" value="1"/>
</dbReference>
<dbReference type="Pfam" id="PF00141">
    <property type="entry name" value="peroxidase"/>
    <property type="match status" value="1"/>
</dbReference>
<dbReference type="Pfam" id="PF11895">
    <property type="entry name" value="Peroxidase_ext"/>
    <property type="match status" value="1"/>
</dbReference>
<dbReference type="PRINTS" id="PR00462">
    <property type="entry name" value="LIGNINASE"/>
</dbReference>
<dbReference type="PRINTS" id="PR00458">
    <property type="entry name" value="PEROXIDASE"/>
</dbReference>
<dbReference type="SUPFAM" id="SSF48113">
    <property type="entry name" value="Heme-dependent peroxidases"/>
    <property type="match status" value="1"/>
</dbReference>
<dbReference type="PROSITE" id="PS00435">
    <property type="entry name" value="PEROXIDASE_1"/>
    <property type="match status" value="1"/>
</dbReference>
<dbReference type="PROSITE" id="PS00436">
    <property type="entry name" value="PEROXIDASE_2"/>
    <property type="match status" value="1"/>
</dbReference>
<dbReference type="PROSITE" id="PS50873">
    <property type="entry name" value="PEROXIDASE_4"/>
    <property type="match status" value="1"/>
</dbReference>
<protein>
    <recommendedName>
        <fullName>Ligninase LG2</fullName>
        <ecNumber evidence="1">1.11.1.14</ecNumber>
    </recommendedName>
    <alternativeName>
        <fullName>Diarylpropane peroxidase</fullName>
    </alternativeName>
    <alternativeName>
        <fullName>Lignin peroxidase</fullName>
    </alternativeName>
</protein>
<name>LIG2_PHACH</name>
<reference key="1">
    <citation type="journal article" date="1991" name="Gene">
        <title>Lignin peroxidase from the basidiomycete Phanerochaete chrysosporium is synthesized as a preproenzyme.</title>
        <authorList>
            <person name="Ritch T.G. Jr."/>
            <person name="Nipper V.J."/>
            <person name="Akileswaran L."/>
            <person name="Smith A.J."/>
            <person name="Pribnow D.G."/>
            <person name="Gold M.H."/>
        </authorList>
    </citation>
    <scope>NUCLEOTIDE SEQUENCE [MRNA]</scope>
    <scope>PROTEIN SEQUENCE OF 29-48</scope>
    <source>
        <strain>ATCC 201542 / OGC101</strain>
    </source>
</reference>
<reference key="2">
    <citation type="journal article" date="1992" name="Gene">
        <title>Characterization of a highly expressed lignin peroxidase-encoding gene from the basidiomycete Phanerochaete chrysosporium.</title>
        <authorList>
            <person name="Ritch T.G. Jr."/>
            <person name="Gold M.H."/>
        </authorList>
    </citation>
    <scope>NUCLEOTIDE SEQUENCE [GENOMIC DNA]</scope>
    <source>
        <strain>ATCC 201542 / OGC101</strain>
    </source>
</reference>
<reference key="3">
    <citation type="journal article" date="1993" name="J. Biol. Chem.">
        <title>Crystallographic refinement of lignin peroxidase at 2 A.</title>
        <authorList>
            <person name="Poulos T.L."/>
            <person name="Edwards S.L."/>
            <person name="Wariishi H."/>
            <person name="Gold M.H."/>
        </authorList>
    </citation>
    <scope>X-RAY CRYSTALLOGRAPHY (2.0 ANGSTROMS)</scope>
</reference>
<reference key="4">
    <citation type="journal article" date="1999" name="J. Mol. Biol.">
        <title>The crystal structure of lignin peroxidase at 1.70-A resolution reveals a hydroxy group on the cbeta of tryptophan 171: a novel radical site formed during the redox cycle.</title>
        <authorList>
            <person name="Choinowski T."/>
            <person name="Blodig W."/>
            <person name="Winterhalter K.H."/>
            <person name="Piontek K."/>
        </authorList>
    </citation>
    <scope>X-RAY CRYSTALLOGRAPHY (1.7 ANGSTROMS)</scope>
    <scope>HYDROXYLATION AT TRP-199</scope>
    <source>
        <strain>ATCC 24725 / DSM 6909 / CBS 481.73 / BCRC 36200 / NRRL 6361 / VKM F-1767</strain>
    </source>
</reference>
<comment type="function">
    <text evidence="1">Depolymerization of lignin. Catalyzes the C(alpha)-C(beta) cleavage of the propyl side chains of lignin.</text>
</comment>
<comment type="catalytic activity">
    <reaction evidence="1">
        <text>1-(3,4-dimethoxyphenyl)-2-(2-methoxyphenoxy)propane-1,3-diol + H2O2 = 3,4-dimethoxybenzaldehyde + guaiacol + glycolaldehyde + H2O</text>
        <dbReference type="Rhea" id="RHEA:48004"/>
        <dbReference type="ChEBI" id="CHEBI:15377"/>
        <dbReference type="ChEBI" id="CHEBI:16240"/>
        <dbReference type="ChEBI" id="CHEBI:17071"/>
        <dbReference type="ChEBI" id="CHEBI:17098"/>
        <dbReference type="ChEBI" id="CHEBI:28591"/>
        <dbReference type="ChEBI" id="CHEBI:86963"/>
        <dbReference type="EC" id="1.11.1.14"/>
    </reaction>
</comment>
<comment type="catalytic activity">
    <reaction evidence="1">
        <text>2 (3,4-dimethoxyphenyl)methanol + H2O2 = 2 (3,4-dimethoxyphenyl)methanol radical + 2 H2O</text>
        <dbReference type="Rhea" id="RHEA:30271"/>
        <dbReference type="ChEBI" id="CHEBI:15377"/>
        <dbReference type="ChEBI" id="CHEBI:16240"/>
        <dbReference type="ChEBI" id="CHEBI:62150"/>
        <dbReference type="ChEBI" id="CHEBI:88143"/>
        <dbReference type="EC" id="1.11.1.14"/>
    </reaction>
</comment>
<comment type="cofactor">
    <cofactor>
        <name>Ca(2+)</name>
        <dbReference type="ChEBI" id="CHEBI:29108"/>
    </cofactor>
    <text>Binds 2 calcium ions per subunit.</text>
</comment>
<comment type="cofactor">
    <cofactor evidence="1">
        <name>heme b</name>
        <dbReference type="ChEBI" id="CHEBI:60344"/>
    </cofactor>
    <text evidence="1">Binds 1 heme b (iron(II)-protoporphyrin IX) group per subunit.</text>
</comment>
<comment type="pathway">
    <text>Secondary metabolite metabolism; lignin degradation.</text>
</comment>
<comment type="developmental stage">
    <text>Ligninases are expressed during secondary metabolism, and are triggered by nutrient limitation.</text>
</comment>
<comment type="similarity">
    <text evidence="5">Belongs to the peroxidase family. Ligninase subfamily.</text>
</comment>
<feature type="signal peptide">
    <location>
        <begin position="1"/>
        <end position="21"/>
    </location>
</feature>
<feature type="propeptide" id="PRO_0000023762" evidence="4">
    <location>
        <begin position="22"/>
        <end position="28"/>
    </location>
</feature>
<feature type="chain" id="PRO_0000023763" description="Ligninase LG2">
    <location>
        <begin position="29"/>
        <end position="371"/>
    </location>
</feature>
<feature type="active site" description="Proton acceptor">
    <location>
        <position position="75"/>
    </location>
</feature>
<feature type="binding site">
    <location>
        <position position="76"/>
    </location>
    <ligand>
        <name>Ca(2+)</name>
        <dbReference type="ChEBI" id="CHEBI:29108"/>
        <label>1</label>
    </ligand>
</feature>
<feature type="binding site">
    <location>
        <position position="94"/>
    </location>
    <ligand>
        <name>Ca(2+)</name>
        <dbReference type="ChEBI" id="CHEBI:29108"/>
        <label>1</label>
    </ligand>
</feature>
<feature type="binding site">
    <location>
        <position position="96"/>
    </location>
    <ligand>
        <name>Ca(2+)</name>
        <dbReference type="ChEBI" id="CHEBI:29108"/>
        <label>1</label>
    </ligand>
</feature>
<feature type="binding site">
    <location>
        <position position="98"/>
    </location>
    <ligand>
        <name>Ca(2+)</name>
        <dbReference type="ChEBI" id="CHEBI:29108"/>
        <label>1</label>
    </ligand>
</feature>
<feature type="binding site" description="axial binding residue">
    <location>
        <position position="204"/>
    </location>
    <ligand>
        <name>heme b</name>
        <dbReference type="ChEBI" id="CHEBI:60344"/>
    </ligand>
    <ligandPart>
        <name>Fe</name>
        <dbReference type="ChEBI" id="CHEBI:18248"/>
    </ligandPart>
</feature>
<feature type="binding site">
    <location>
        <position position="205"/>
    </location>
    <ligand>
        <name>Ca(2+)</name>
        <dbReference type="ChEBI" id="CHEBI:29108"/>
        <label>2</label>
    </ligand>
</feature>
<feature type="binding site">
    <location>
        <position position="222"/>
    </location>
    <ligand>
        <name>Ca(2+)</name>
        <dbReference type="ChEBI" id="CHEBI:29108"/>
        <label>2</label>
    </ligand>
</feature>
<feature type="binding site">
    <location>
        <position position="224"/>
    </location>
    <ligand>
        <name>Ca(2+)</name>
        <dbReference type="ChEBI" id="CHEBI:29108"/>
        <label>2</label>
    </ligand>
</feature>
<feature type="binding site">
    <location>
        <position position="227"/>
    </location>
    <ligand>
        <name>Ca(2+)</name>
        <dbReference type="ChEBI" id="CHEBI:29108"/>
        <label>2</label>
    </ligand>
</feature>
<feature type="binding site">
    <location>
        <position position="229"/>
    </location>
    <ligand>
        <name>Ca(2+)</name>
        <dbReference type="ChEBI" id="CHEBI:29108"/>
        <label>2</label>
    </ligand>
</feature>
<feature type="site" description="Transition state stabilizer">
    <location>
        <position position="71"/>
    </location>
</feature>
<feature type="modified residue" description="3-hydroxytryptophan" evidence="3">
    <location>
        <position position="199"/>
    </location>
</feature>
<feature type="glycosylation site" description="N-linked (GlcNAc...) asparagine" evidence="2">
    <location>
        <position position="285"/>
    </location>
</feature>
<feature type="disulfide bond">
    <location>
        <begin position="31"/>
        <end position="43"/>
    </location>
</feature>
<feature type="disulfide bond">
    <location>
        <begin position="42"/>
        <end position="313"/>
    </location>
</feature>
<feature type="disulfide bond">
    <location>
        <begin position="62"/>
        <end position="148"/>
    </location>
</feature>
<feature type="disulfide bond">
    <location>
        <begin position="277"/>
        <end position="345"/>
    </location>
</feature>
<feature type="helix" evidence="7">
    <location>
        <begin position="40"/>
        <end position="43"/>
    </location>
</feature>
<feature type="helix" evidence="7">
    <location>
        <begin position="44"/>
        <end position="55"/>
    </location>
</feature>
<feature type="turn" evidence="7">
    <location>
        <begin position="58"/>
        <end position="60"/>
    </location>
</feature>
<feature type="helix" evidence="7">
    <location>
        <begin position="64"/>
        <end position="77"/>
    </location>
</feature>
<feature type="helix" evidence="7">
    <location>
        <begin position="82"/>
        <end position="86"/>
    </location>
</feature>
<feature type="strand" evidence="6">
    <location>
        <begin position="87"/>
        <end position="89"/>
    </location>
</feature>
<feature type="strand" evidence="7">
    <location>
        <begin position="94"/>
        <end position="97"/>
    </location>
</feature>
<feature type="helix" evidence="7">
    <location>
        <begin position="98"/>
        <end position="101"/>
    </location>
</feature>
<feature type="helix" evidence="7">
    <location>
        <begin position="103"/>
        <end position="106"/>
    </location>
</feature>
<feature type="helix" evidence="7">
    <location>
        <begin position="110"/>
        <end position="112"/>
    </location>
</feature>
<feature type="helix" evidence="7">
    <location>
        <begin position="115"/>
        <end position="129"/>
    </location>
</feature>
<feature type="helix" evidence="7">
    <location>
        <begin position="133"/>
        <end position="146"/>
    </location>
</feature>
<feature type="helix" evidence="7">
    <location>
        <begin position="179"/>
        <end position="190"/>
    </location>
</feature>
<feature type="helix" evidence="7">
    <location>
        <begin position="194"/>
        <end position="200"/>
    </location>
</feature>
<feature type="helix" evidence="7">
    <location>
        <begin position="201"/>
        <end position="206"/>
    </location>
</feature>
<feature type="strand" evidence="7">
    <location>
        <begin position="208"/>
        <end position="213"/>
    </location>
</feature>
<feature type="strand" evidence="7">
    <location>
        <begin position="219"/>
        <end position="223"/>
    </location>
</feature>
<feature type="helix" evidence="7">
    <location>
        <begin position="231"/>
        <end position="235"/>
    </location>
</feature>
<feature type="strand" evidence="7">
    <location>
        <begin position="255"/>
        <end position="257"/>
    </location>
</feature>
<feature type="helix" evidence="7">
    <location>
        <begin position="264"/>
        <end position="269"/>
    </location>
</feature>
<feature type="turn" evidence="7">
    <location>
        <begin position="273"/>
        <end position="275"/>
    </location>
</feature>
<feature type="helix" evidence="7">
    <location>
        <begin position="276"/>
        <end position="280"/>
    </location>
</feature>
<feature type="turn" evidence="7">
    <location>
        <begin position="281"/>
        <end position="284"/>
    </location>
</feature>
<feature type="helix" evidence="7">
    <location>
        <begin position="286"/>
        <end position="301"/>
    </location>
</feature>
<feature type="turn" evidence="7">
    <location>
        <begin position="302"/>
        <end position="304"/>
    </location>
</feature>
<feature type="helix" evidence="7">
    <location>
        <begin position="307"/>
        <end position="309"/>
    </location>
</feature>
<feature type="strand" evidence="7">
    <location>
        <begin position="310"/>
        <end position="312"/>
    </location>
</feature>
<feature type="helix" evidence="7">
    <location>
        <begin position="314"/>
        <end position="316"/>
    </location>
</feature>
<feature type="strand" evidence="7">
    <location>
        <begin position="324"/>
        <end position="327"/>
    </location>
</feature>
<feature type="helix" evidence="7">
    <location>
        <begin position="338"/>
        <end position="340"/>
    </location>
</feature>
<feature type="strand" evidence="7">
    <location>
        <begin position="346"/>
        <end position="348"/>
    </location>
</feature>
<feature type="strand" evidence="7">
    <location>
        <begin position="357"/>
        <end position="359"/>
    </location>
</feature>
<sequence>MAFKQLFAAITVALSLTAANAAVVKEKRATCANGKTVGDASCCAWFDVLDDIQANMFHGGQCGAEAHESIRLVFHDSIAISPAMEAKGKFGGGGADGSIMIFDTIETAFHPNIGLDEVVAMQKPFVQKHGVTPGDFIAFAGAVALSNCPGAPQMNFFTGRKPATQPAPDGLVPEPFHTVDQIIARVNDAGEFDELELVWMLSAHSVAAVNDVDPTVQGLPFDSTPGIFDSQFFVETQFRGTLFPGSGGNQGEVESGMAGEIRIQTDHTLARDSRTACEWQSFVGNQSKLVDDFQFIFLALTQLGQDPNAMTDCSDVIPLSKPIPGNGPFSFFPPGKSHSDIEQACAETPFPSLVTLPGPATSVARIPPHKA</sequence>
<accession>P49012</accession>